<name>AQP4_MILTA</name>
<evidence type="ECO:0000255" key="1"/>
<evidence type="ECO:0000255" key="2">
    <source>
        <dbReference type="PROSITE-ProRule" id="PRU00498"/>
    </source>
</evidence>
<evidence type="ECO:0000269" key="3">
    <source>
    </source>
</evidence>
<evidence type="ECO:0000269" key="4">
    <source>
    </source>
</evidence>
<evidence type="ECO:0000303" key="5">
    <source>
    </source>
</evidence>
<evidence type="ECO:0000305" key="6"/>
<evidence type="ECO:0000305" key="7">
    <source>
    </source>
</evidence>
<feature type="chain" id="PRO_0000440205" description="Aquaporin-4">
    <location>
        <begin position="1"/>
        <end position="349"/>
    </location>
</feature>
<feature type="transmembrane region" description="Helical" evidence="1">
    <location>
        <begin position="92"/>
        <end position="112"/>
    </location>
</feature>
<feature type="transmembrane region" description="Helical" evidence="1">
    <location>
        <begin position="125"/>
        <end position="147"/>
    </location>
</feature>
<feature type="transmembrane region" description="Helical" evidence="1">
    <location>
        <begin position="167"/>
        <end position="187"/>
    </location>
</feature>
<feature type="transmembrane region" description="Helical" evidence="1">
    <location>
        <begin position="225"/>
        <end position="245"/>
    </location>
</feature>
<feature type="transmembrane region" description="Helical" evidence="1">
    <location>
        <begin position="256"/>
        <end position="276"/>
    </location>
</feature>
<feature type="transmembrane region" description="Helical" evidence="1">
    <location>
        <begin position="314"/>
        <end position="334"/>
    </location>
</feature>
<feature type="short sequence motif" description="NPA 1">
    <location>
        <begin position="148"/>
        <end position="150"/>
    </location>
</feature>
<feature type="short sequence motif" description="NPA 2">
    <location>
        <begin position="281"/>
        <end position="283"/>
    </location>
</feature>
<feature type="glycosylation site" description="N-linked (GlcNAc...) asparagine" evidence="2">
    <location>
        <position position="194"/>
    </location>
</feature>
<feature type="glycosylation site" description="N-linked (GlcNAc...) asparagine" evidence="2">
    <location>
        <position position="207"/>
    </location>
</feature>
<reference key="1">
    <citation type="journal article" date="2013" name="Bioinf. Biol. Insights">
        <title>The aquaporin channel repertoire of the tardigrade Milnesium tardigradum.</title>
        <authorList>
            <person name="Grohme M.A."/>
            <person name="Mali B."/>
            <person name="Welnicz W."/>
            <person name="Michel S."/>
            <person name="Schill R.O."/>
            <person name="Frohme M."/>
        </authorList>
    </citation>
    <scope>NUCLEOTIDE SEQUENCE [MRNA]</scope>
    <scope>DOMAIN</scope>
    <scope>INDUCTION</scope>
</reference>
<reference key="2">
    <citation type="journal article" date="2012" name="PLoS ONE">
        <title>Comparative proteome analysis of Milnesium tardigradum in early embryonic state versus adults in active and anhydrobiotic state.</title>
        <authorList>
            <person name="Schokraie E."/>
            <person name="Warnken U."/>
            <person name="Hotz-Wagenblatt A."/>
            <person name="Grohme M.A."/>
            <person name="Hengherr S."/>
            <person name="Foerster F."/>
            <person name="Schill R.O."/>
            <person name="Frohme M."/>
            <person name="Dandekar T."/>
            <person name="Schnoelzer M."/>
        </authorList>
    </citation>
    <scope>IDENTIFICATION BY MASS SPECTROMETRY</scope>
    <scope>INDUCTION</scope>
</reference>
<keyword id="KW-1003">Cell membrane</keyword>
<keyword id="KW-0325">Glycoprotein</keyword>
<keyword id="KW-0472">Membrane</keyword>
<keyword id="KW-0677">Repeat</keyword>
<keyword id="KW-0346">Stress response</keyword>
<keyword id="KW-0812">Transmembrane</keyword>
<keyword id="KW-1133">Transmembrane helix</keyword>
<keyword id="KW-0813">Transport</keyword>
<comment type="function">
    <text evidence="7">Aquaglyceroporin that may modulate the water content and osmolytes during anhydrobiosis (PubMed:23761966).</text>
</comment>
<comment type="subcellular location">
    <subcellularLocation>
        <location evidence="6">Cell membrane</location>
        <topology evidence="1">Multi-pass membrane protein</topology>
    </subcellularLocation>
</comment>
<comment type="induction">
    <text evidence="3 4">Most abundant aquaporin in early embryonic state, adult active, and adult anhydrobiotic state (PubMed:23029181, PubMed:23761966). Expression is slightly up-regulated in early embryonic state (PubMed:23029181).</text>
</comment>
<comment type="domain">
    <text evidence="7">Aquaporins contain two tandem repeats each containing three membrane-spanning domains and a pore-forming loop with the signature motif Asn-Pro-Ala (NPA).</text>
</comment>
<comment type="similarity">
    <text evidence="6">Belongs to the MIP/aquaporin (TC 1.A.8) family.</text>
</comment>
<proteinExistence type="evidence at protein level"/>
<protein>
    <recommendedName>
        <fullName evidence="5">Aquaporin-4</fullName>
        <shortName evidence="5">AQP-4</shortName>
    </recommendedName>
</protein>
<organism>
    <name type="scientific">Milnesium tardigradum</name>
    <name type="common">Water bear</name>
    <name type="synonym">Tardigrade</name>
    <dbReference type="NCBI Taxonomy" id="46460"/>
    <lineage>
        <taxon>Eukaryota</taxon>
        <taxon>Metazoa</taxon>
        <taxon>Ecdysozoa</taxon>
        <taxon>Tardigrada</taxon>
        <taxon>Eutardigrada</taxon>
        <taxon>Apochela</taxon>
        <taxon>Milnesiidae</taxon>
        <taxon>Milnesium</taxon>
    </lineage>
</organism>
<accession>G5CTG1</accession>
<gene>
    <name evidence="5" type="primary">AQP4</name>
</gene>
<dbReference type="EMBL" id="JN378739">
    <property type="protein sequence ID" value="AEP14558.2"/>
    <property type="molecule type" value="mRNA"/>
</dbReference>
<dbReference type="SMR" id="G5CTG1"/>
<dbReference type="GlyCosmos" id="G5CTG1">
    <property type="glycosylation" value="2 sites, No reported glycans"/>
</dbReference>
<dbReference type="GO" id="GO:0005886">
    <property type="term" value="C:plasma membrane"/>
    <property type="evidence" value="ECO:0007669"/>
    <property type="project" value="UniProtKB-SubCell"/>
</dbReference>
<dbReference type="GO" id="GO:0015254">
    <property type="term" value="F:glycerol channel activity"/>
    <property type="evidence" value="ECO:0007669"/>
    <property type="project" value="TreeGrafter"/>
</dbReference>
<dbReference type="GO" id="GO:0015250">
    <property type="term" value="F:water channel activity"/>
    <property type="evidence" value="ECO:0007669"/>
    <property type="project" value="TreeGrafter"/>
</dbReference>
<dbReference type="Gene3D" id="1.20.1080.10">
    <property type="entry name" value="Glycerol uptake facilitator protein"/>
    <property type="match status" value="1"/>
</dbReference>
<dbReference type="InterPro" id="IPR023271">
    <property type="entry name" value="Aquaporin-like"/>
</dbReference>
<dbReference type="InterPro" id="IPR023275">
    <property type="entry name" value="Aquaporin_3"/>
</dbReference>
<dbReference type="InterPro" id="IPR000425">
    <property type="entry name" value="MIP"/>
</dbReference>
<dbReference type="InterPro" id="IPR050363">
    <property type="entry name" value="MIP/Aquaporin"/>
</dbReference>
<dbReference type="PANTHER" id="PTHR43829">
    <property type="entry name" value="AQUAPORIN OR AQUAGLYCEROPORIN RELATED"/>
    <property type="match status" value="1"/>
</dbReference>
<dbReference type="PANTHER" id="PTHR43829:SF9">
    <property type="entry name" value="AQUAPORIN-9"/>
    <property type="match status" value="1"/>
</dbReference>
<dbReference type="Pfam" id="PF00230">
    <property type="entry name" value="MIP"/>
    <property type="match status" value="1"/>
</dbReference>
<dbReference type="PRINTS" id="PR02015">
    <property type="entry name" value="AQUAPORIN3"/>
</dbReference>
<dbReference type="PRINTS" id="PR00783">
    <property type="entry name" value="MINTRINSICP"/>
</dbReference>
<dbReference type="SUPFAM" id="SSF81338">
    <property type="entry name" value="Aquaporin-like"/>
    <property type="match status" value="1"/>
</dbReference>
<sequence>MSKVPPTDPFSHMLNGNLQQRIVKRDIDGEVPTERAVTDLASEKAHAIATHGEVVIQIQHSDTFGMDKEKNDWRSRAARMLYIESRLVREGLSESLAMFFFMSLLLGCAATARFTGNQNDPMLAAFYHGFSIIFAIYVAGGISGGLLNPAITFTIAFLGRLSWLRCLIYMSAQYFGAFIASAVVYLIYYDSLQNFSGANKVDETGANGTAGIWSTFPRPYLSLRGAIFNQIFCTMLLTIGFLSICDFRNSRPDKGMFPFAVGMLIMTVFLAFSYSAGAAMNPARDISPRLWTLIVGYGDEVFSYNNYKWFWIPWLFPYVGALLGGVIYEIFIGIHWPKDYANKHVTNRT</sequence>